<evidence type="ECO:0000255" key="1">
    <source>
        <dbReference type="HAMAP-Rule" id="MF_01380"/>
    </source>
</evidence>
<sequence length="114" mass="12100">MSDDVALPLEFTDAAANKVKSLIADEDNPNLKLRVYITGGGCSGFQYGFTFDDQVNEGDMTIEKQGVGLVVDPMSLQYLVGGSVDYTEGLEGSRFIVTNPNAKSTCGCGSSFSI</sequence>
<dbReference type="EMBL" id="FM180568">
    <property type="protein sequence ID" value="CAS07711.1"/>
    <property type="molecule type" value="Genomic_DNA"/>
</dbReference>
<dbReference type="RefSeq" id="WP_001295564.1">
    <property type="nucleotide sequence ID" value="NC_011601.1"/>
</dbReference>
<dbReference type="SMR" id="B7UIK3"/>
<dbReference type="GeneID" id="93777270"/>
<dbReference type="KEGG" id="ecg:E2348C_0163"/>
<dbReference type="HOGENOM" id="CLU_069054_5_3_6"/>
<dbReference type="Proteomes" id="UP000008205">
    <property type="component" value="Chromosome"/>
</dbReference>
<dbReference type="GO" id="GO:0005829">
    <property type="term" value="C:cytosol"/>
    <property type="evidence" value="ECO:0007669"/>
    <property type="project" value="TreeGrafter"/>
</dbReference>
<dbReference type="GO" id="GO:0051537">
    <property type="term" value="F:2 iron, 2 sulfur cluster binding"/>
    <property type="evidence" value="ECO:0007669"/>
    <property type="project" value="TreeGrafter"/>
</dbReference>
<dbReference type="GO" id="GO:0051539">
    <property type="term" value="F:4 iron, 4 sulfur cluster binding"/>
    <property type="evidence" value="ECO:0007669"/>
    <property type="project" value="TreeGrafter"/>
</dbReference>
<dbReference type="GO" id="GO:0005506">
    <property type="term" value="F:iron ion binding"/>
    <property type="evidence" value="ECO:0007669"/>
    <property type="project" value="UniProtKB-UniRule"/>
</dbReference>
<dbReference type="GO" id="GO:0016226">
    <property type="term" value="P:iron-sulfur cluster assembly"/>
    <property type="evidence" value="ECO:0007669"/>
    <property type="project" value="UniProtKB-UniRule"/>
</dbReference>
<dbReference type="FunFam" id="2.60.300.12:FF:000002">
    <property type="entry name" value="Iron-sulfur cluster insertion protein ErpA"/>
    <property type="match status" value="1"/>
</dbReference>
<dbReference type="Gene3D" id="2.60.300.12">
    <property type="entry name" value="HesB-like domain"/>
    <property type="match status" value="1"/>
</dbReference>
<dbReference type="HAMAP" id="MF_01380">
    <property type="entry name" value="Fe_S_insert_ErpA"/>
    <property type="match status" value="1"/>
</dbReference>
<dbReference type="InterPro" id="IPR000361">
    <property type="entry name" value="FeS_biogenesis"/>
</dbReference>
<dbReference type="InterPro" id="IPR016092">
    <property type="entry name" value="FeS_cluster_insertion"/>
</dbReference>
<dbReference type="InterPro" id="IPR017870">
    <property type="entry name" value="FeS_cluster_insertion_CS"/>
</dbReference>
<dbReference type="InterPro" id="IPR023063">
    <property type="entry name" value="FeS_cluster_insertion_RrpA"/>
</dbReference>
<dbReference type="InterPro" id="IPR035903">
    <property type="entry name" value="HesB-like_dom_sf"/>
</dbReference>
<dbReference type="NCBIfam" id="TIGR00049">
    <property type="entry name" value="iron-sulfur cluster assembly accessory protein"/>
    <property type="match status" value="1"/>
</dbReference>
<dbReference type="NCBIfam" id="NF010147">
    <property type="entry name" value="PRK13623.1"/>
    <property type="match status" value="1"/>
</dbReference>
<dbReference type="PANTHER" id="PTHR43011">
    <property type="entry name" value="IRON-SULFUR CLUSTER ASSEMBLY 2 HOMOLOG, MITOCHONDRIAL"/>
    <property type="match status" value="1"/>
</dbReference>
<dbReference type="PANTHER" id="PTHR43011:SF1">
    <property type="entry name" value="IRON-SULFUR CLUSTER ASSEMBLY 2 HOMOLOG, MITOCHONDRIAL"/>
    <property type="match status" value="1"/>
</dbReference>
<dbReference type="Pfam" id="PF01521">
    <property type="entry name" value="Fe-S_biosyn"/>
    <property type="match status" value="1"/>
</dbReference>
<dbReference type="SUPFAM" id="SSF89360">
    <property type="entry name" value="HesB-like domain"/>
    <property type="match status" value="1"/>
</dbReference>
<dbReference type="PROSITE" id="PS01152">
    <property type="entry name" value="HESB"/>
    <property type="match status" value="1"/>
</dbReference>
<accession>B7UIK3</accession>
<reference key="1">
    <citation type="journal article" date="2009" name="J. Bacteriol.">
        <title>Complete genome sequence and comparative genome analysis of enteropathogenic Escherichia coli O127:H6 strain E2348/69.</title>
        <authorList>
            <person name="Iguchi A."/>
            <person name="Thomson N.R."/>
            <person name="Ogura Y."/>
            <person name="Saunders D."/>
            <person name="Ooka T."/>
            <person name="Henderson I.R."/>
            <person name="Harris D."/>
            <person name="Asadulghani M."/>
            <person name="Kurokawa K."/>
            <person name="Dean P."/>
            <person name="Kenny B."/>
            <person name="Quail M.A."/>
            <person name="Thurston S."/>
            <person name="Dougan G."/>
            <person name="Hayashi T."/>
            <person name="Parkhill J."/>
            <person name="Frankel G."/>
        </authorList>
    </citation>
    <scope>NUCLEOTIDE SEQUENCE [LARGE SCALE GENOMIC DNA]</scope>
    <source>
        <strain>E2348/69 / EPEC</strain>
    </source>
</reference>
<comment type="function">
    <text evidence="1">Required for insertion of 4Fe-4S clusters for at least IspG.</text>
</comment>
<comment type="cofactor">
    <cofactor evidence="1">
        <name>iron-sulfur cluster</name>
        <dbReference type="ChEBI" id="CHEBI:30408"/>
    </cofactor>
    <text evidence="1">Binds 1 iron-sulfur cluster per subunit.</text>
</comment>
<comment type="subunit">
    <text evidence="1">Homodimer.</text>
</comment>
<comment type="similarity">
    <text evidence="1">Belongs to the HesB/IscA family.</text>
</comment>
<feature type="chain" id="PRO_1000184201" description="Iron-sulfur cluster insertion protein ErpA">
    <location>
        <begin position="1"/>
        <end position="114"/>
    </location>
</feature>
<feature type="binding site" evidence="1">
    <location>
        <position position="42"/>
    </location>
    <ligand>
        <name>iron-sulfur cluster</name>
        <dbReference type="ChEBI" id="CHEBI:30408"/>
    </ligand>
</feature>
<feature type="binding site" evidence="1">
    <location>
        <position position="106"/>
    </location>
    <ligand>
        <name>iron-sulfur cluster</name>
        <dbReference type="ChEBI" id="CHEBI:30408"/>
    </ligand>
</feature>
<feature type="binding site" evidence="1">
    <location>
        <position position="108"/>
    </location>
    <ligand>
        <name>iron-sulfur cluster</name>
        <dbReference type="ChEBI" id="CHEBI:30408"/>
    </ligand>
</feature>
<name>ERPA_ECO27</name>
<proteinExistence type="inferred from homology"/>
<keyword id="KW-0408">Iron</keyword>
<keyword id="KW-0411">Iron-sulfur</keyword>
<keyword id="KW-0479">Metal-binding</keyword>
<keyword id="KW-1185">Reference proteome</keyword>
<gene>
    <name evidence="1" type="primary">erpA</name>
    <name type="ordered locus">E2348C_0163</name>
</gene>
<protein>
    <recommendedName>
        <fullName evidence="1">Iron-sulfur cluster insertion protein ErpA</fullName>
    </recommendedName>
</protein>
<organism>
    <name type="scientific">Escherichia coli O127:H6 (strain E2348/69 / EPEC)</name>
    <dbReference type="NCBI Taxonomy" id="574521"/>
    <lineage>
        <taxon>Bacteria</taxon>
        <taxon>Pseudomonadati</taxon>
        <taxon>Pseudomonadota</taxon>
        <taxon>Gammaproteobacteria</taxon>
        <taxon>Enterobacterales</taxon>
        <taxon>Enterobacteriaceae</taxon>
        <taxon>Escherichia</taxon>
    </lineage>
</organism>